<feature type="chain" id="PRO_1000044922" description="(5-formylfuran-3-yl)methyl phosphate synthase">
    <location>
        <begin position="1"/>
        <end position="236"/>
    </location>
</feature>
<feature type="active site" description="Schiff-base intermediate with substrate" evidence="1">
    <location>
        <position position="27"/>
    </location>
</feature>
<feature type="active site" description="Proton acceptor" evidence="1">
    <location>
        <position position="85"/>
    </location>
</feature>
<comment type="function">
    <text evidence="1">Catalyzes the formation of 4-(hydroxymethyl)-2-furancarboxaldehyde phosphate (4-HFC-P) from two molecules of glyceraldehyde-3-P (GA-3-P).</text>
</comment>
<comment type="catalytic activity">
    <reaction evidence="1">
        <text>2 D-glyceraldehyde 3-phosphate = 4-(hydroxymethyl)-2-furancarboxaldehyde phosphate + phosphate + 2 H2O</text>
        <dbReference type="Rhea" id="RHEA:43536"/>
        <dbReference type="ChEBI" id="CHEBI:15377"/>
        <dbReference type="ChEBI" id="CHEBI:43474"/>
        <dbReference type="ChEBI" id="CHEBI:59776"/>
        <dbReference type="ChEBI" id="CHEBI:83407"/>
        <dbReference type="EC" id="4.2.3.153"/>
    </reaction>
</comment>
<comment type="pathway">
    <text evidence="1">Cofactor biosynthesis; methanofuran biosynthesis.</text>
</comment>
<comment type="similarity">
    <text evidence="1">Belongs to the MfnB family.</text>
</comment>
<organism>
    <name type="scientific">Methanococcus maripaludis (strain DSM 14266 / JCM 13030 / NBRC 101832 / S2 / LL)</name>
    <dbReference type="NCBI Taxonomy" id="267377"/>
    <lineage>
        <taxon>Archaea</taxon>
        <taxon>Methanobacteriati</taxon>
        <taxon>Methanobacteriota</taxon>
        <taxon>Methanomada group</taxon>
        <taxon>Methanococci</taxon>
        <taxon>Methanococcales</taxon>
        <taxon>Methanococcaceae</taxon>
        <taxon>Methanococcus</taxon>
    </lineage>
</organism>
<protein>
    <recommendedName>
        <fullName evidence="1">(5-formylfuran-3-yl)methyl phosphate synthase</fullName>
        <ecNumber evidence="1">4.2.3.153</ecNumber>
    </recommendedName>
    <alternativeName>
        <fullName evidence="1">4-(hydroxymethyl)-2-furancarboxaldehyde-phosphate synthase</fullName>
        <shortName evidence="1">4-HFC-P synthase</shortName>
    </alternativeName>
</protein>
<accession>Q6LZC1</accession>
<name>MFNB_METMP</name>
<reference key="1">
    <citation type="journal article" date="2004" name="J. Bacteriol.">
        <title>Complete genome sequence of the genetically tractable hydrogenotrophic methanogen Methanococcus maripaludis.</title>
        <authorList>
            <person name="Hendrickson E.L."/>
            <person name="Kaul R."/>
            <person name="Zhou Y."/>
            <person name="Bovee D."/>
            <person name="Chapman P."/>
            <person name="Chung J."/>
            <person name="Conway de Macario E."/>
            <person name="Dodsworth J.A."/>
            <person name="Gillett W."/>
            <person name="Graham D.E."/>
            <person name="Hackett M."/>
            <person name="Haydock A.K."/>
            <person name="Kang A."/>
            <person name="Land M.L."/>
            <person name="Levy R."/>
            <person name="Lie T.J."/>
            <person name="Major T.A."/>
            <person name="Moore B.C."/>
            <person name="Porat I."/>
            <person name="Palmeiri A."/>
            <person name="Rouse G."/>
            <person name="Saenphimmachak C."/>
            <person name="Soell D."/>
            <person name="Van Dien S."/>
            <person name="Wang T."/>
            <person name="Whitman W.B."/>
            <person name="Xia Q."/>
            <person name="Zhang Y."/>
            <person name="Larimer F.W."/>
            <person name="Olson M.V."/>
            <person name="Leigh J.A."/>
        </authorList>
    </citation>
    <scope>NUCLEOTIDE SEQUENCE [LARGE SCALE GENOMIC DNA]</scope>
    <source>
        <strain>DSM 14266 / JCM 13030 / NBRC 101832 / S2 / LL</strain>
    </source>
</reference>
<gene>
    <name evidence="1" type="primary">mfnB</name>
    <name type="ordered locus">MMP0708</name>
</gene>
<evidence type="ECO:0000255" key="1">
    <source>
        <dbReference type="HAMAP-Rule" id="MF_00681"/>
    </source>
</evidence>
<dbReference type="EC" id="4.2.3.153" evidence="1"/>
<dbReference type="EMBL" id="BX950229">
    <property type="protein sequence ID" value="CAF30264.1"/>
    <property type="molecule type" value="Genomic_DNA"/>
</dbReference>
<dbReference type="RefSeq" id="WP_011170652.1">
    <property type="nucleotide sequence ID" value="NC_005791.1"/>
</dbReference>
<dbReference type="SMR" id="Q6LZC1"/>
<dbReference type="STRING" id="267377.MMP0708"/>
<dbReference type="EnsemblBacteria" id="CAF30264">
    <property type="protein sequence ID" value="CAF30264"/>
    <property type="gene ID" value="MMP0708"/>
</dbReference>
<dbReference type="KEGG" id="mmp:MMP0708"/>
<dbReference type="PATRIC" id="fig|267377.15.peg.725"/>
<dbReference type="eggNOG" id="arCOG04482">
    <property type="taxonomic scope" value="Archaea"/>
</dbReference>
<dbReference type="HOGENOM" id="CLU_068659_0_0_2"/>
<dbReference type="OrthoDB" id="81473at2157"/>
<dbReference type="UniPathway" id="UPA00080"/>
<dbReference type="Proteomes" id="UP000000590">
    <property type="component" value="Chromosome"/>
</dbReference>
<dbReference type="GO" id="GO:0016830">
    <property type="term" value="F:carbon-carbon lyase activity"/>
    <property type="evidence" value="ECO:0007669"/>
    <property type="project" value="UniProtKB-UniRule"/>
</dbReference>
<dbReference type="GO" id="GO:2001120">
    <property type="term" value="P:methanofuran biosynthetic process"/>
    <property type="evidence" value="ECO:0007669"/>
    <property type="project" value="UniProtKB-UniRule"/>
</dbReference>
<dbReference type="HAMAP" id="MF_00681">
    <property type="entry name" value="MfnB"/>
    <property type="match status" value="1"/>
</dbReference>
<dbReference type="InterPro" id="IPR007565">
    <property type="entry name" value="4HFCP_synth"/>
</dbReference>
<dbReference type="InterPro" id="IPR035081">
    <property type="entry name" value="4HFCP_synth_arc"/>
</dbReference>
<dbReference type="NCBIfam" id="NF002573">
    <property type="entry name" value="PRK02227.1-1"/>
    <property type="match status" value="1"/>
</dbReference>
<dbReference type="NCBIfam" id="NF002575">
    <property type="entry name" value="PRK02227.1-3"/>
    <property type="match status" value="1"/>
</dbReference>
<dbReference type="Pfam" id="PF04476">
    <property type="entry name" value="4HFCP_synth"/>
    <property type="match status" value="1"/>
</dbReference>
<dbReference type="PIRSF" id="PIRSF015957">
    <property type="entry name" value="UCP015957"/>
    <property type="match status" value="1"/>
</dbReference>
<dbReference type="SUPFAM" id="SSF51569">
    <property type="entry name" value="Aldolase"/>
    <property type="match status" value="1"/>
</dbReference>
<dbReference type="SUPFAM" id="SSF51395">
    <property type="entry name" value="FMN-linked oxidoreductases"/>
    <property type="match status" value="1"/>
</dbReference>
<sequence length="236" mass="25114">MILLVSPKDVAEAYEAIEGGADIIDVKNPPEGSLGANFPWVIKETREATPEGMLVSAAIGDVPYKPGTVTLAALGATVSGADYIKVGLYGTRSYQEALDVMKNVTKAVKDAGENKIVVAAGYADAYRVGAVDPLVIPKVARDAGCDVAMLDTAVKDGKTLFDHMDLDLLREFVEETHKYGMKCALAGSIKIEEIPMLKEIGCDIVGVRGAACTQGDRNAGRIQKDLVKEIVKVCRD</sequence>
<keyword id="KW-0456">Lyase</keyword>
<keyword id="KW-1185">Reference proteome</keyword>
<keyword id="KW-0704">Schiff base</keyword>
<proteinExistence type="inferred from homology"/>